<dbReference type="EMBL" id="AP003032">
    <property type="status" value="NOT_ANNOTATED_CDS"/>
    <property type="molecule type" value="Genomic_DNA"/>
</dbReference>
<dbReference type="RefSeq" id="NP_001190190.1">
    <molecule id="E9PQ53-1"/>
    <property type="nucleotide sequence ID" value="NM_001203261.2"/>
</dbReference>
<dbReference type="SMR" id="E9PQ53"/>
<dbReference type="BioGRID" id="1529408">
    <property type="interactions" value="2"/>
</dbReference>
<dbReference type="FunCoup" id="E9PQ53">
    <property type="interactions" value="809"/>
</dbReference>
<dbReference type="IntAct" id="E9PQ53">
    <property type="interactions" value="1"/>
</dbReference>
<dbReference type="BioMuta" id="NDUFC2-KCTD14"/>
<dbReference type="jPOST" id="E9PQ53"/>
<dbReference type="MassIVE" id="E9PQ53"/>
<dbReference type="PaxDb" id="9606-ENSP00000432614"/>
<dbReference type="Pumba" id="E9PQ53"/>
<dbReference type="DNASU" id="100532726"/>
<dbReference type="Ensembl" id="ENST00000530054.1">
    <molecule id="E9PQ53-1"/>
    <property type="protein sequence ID" value="ENSP00000432614.1"/>
    <property type="gene ID" value="ENSG00000259112.2"/>
</dbReference>
<dbReference type="GeneID" id="100532726"/>
<dbReference type="KEGG" id="hsa:100532726"/>
<dbReference type="UCSC" id="uc021qns.2">
    <molecule id="E9PQ53-1"/>
    <property type="organism name" value="human"/>
</dbReference>
<dbReference type="AGR" id="HGNC:42956"/>
<dbReference type="CTD" id="100532726"/>
<dbReference type="DisGeNET" id="100532726"/>
<dbReference type="GeneCards" id="NDUFC2-KCTD14"/>
<dbReference type="HGNC" id="HGNC:42956">
    <property type="gene designation" value="NDUFC2-KCTD14"/>
</dbReference>
<dbReference type="HPA" id="ENSG00000259112">
    <property type="expression patterns" value="Low tissue specificity"/>
</dbReference>
<dbReference type="MalaCards" id="NDUFC2-KCTD14"/>
<dbReference type="neXtProt" id="NX_E9PQ53"/>
<dbReference type="OpenTargets" id="ENSG00000259112"/>
<dbReference type="VEuPathDB" id="HostDB:ENSG00000259112"/>
<dbReference type="eggNOG" id="KOG4516">
    <property type="taxonomic scope" value="Eukaryota"/>
</dbReference>
<dbReference type="HOGENOM" id="CLU_156652_0_0_1"/>
<dbReference type="InParanoid" id="E9PQ53"/>
<dbReference type="OMA" id="KEPRKMR"/>
<dbReference type="PAN-GO" id="E9PQ53">
    <property type="GO annotations" value="1 GO annotation based on evolutionary models"/>
</dbReference>
<dbReference type="PhylomeDB" id="E9PQ53"/>
<dbReference type="TreeFam" id="TF314723"/>
<dbReference type="PathwayCommons" id="E9PQ53"/>
<dbReference type="BioGRID-ORCS" id="100532726">
    <property type="hits" value="229 hits in 667 CRISPR screens"/>
</dbReference>
<dbReference type="ChiTaRS" id="NDUFC2-KCTD14">
    <property type="organism name" value="human"/>
</dbReference>
<dbReference type="GenomeRNAi" id="100532726"/>
<dbReference type="Pharos" id="E9PQ53">
    <property type="development level" value="Tdark"/>
</dbReference>
<dbReference type="PRO" id="PR:E9PQ53"/>
<dbReference type="Proteomes" id="UP000005640">
    <property type="component" value="Chromosome 11"/>
</dbReference>
<dbReference type="RNAct" id="E9PQ53">
    <property type="molecule type" value="protein"/>
</dbReference>
<dbReference type="Bgee" id="ENSG00000259112">
    <property type="expression patterns" value="Expressed in male germ line stem cell (sensu Vertebrata) in testis and 103 other cell types or tissues"/>
</dbReference>
<dbReference type="ExpressionAtlas" id="E9PQ53">
    <property type="expression patterns" value="baseline"/>
</dbReference>
<dbReference type="GO" id="GO:0005743">
    <property type="term" value="C:mitochondrial inner membrane"/>
    <property type="evidence" value="ECO:0007669"/>
    <property type="project" value="UniProtKB-SubCell"/>
</dbReference>
<dbReference type="GO" id="GO:0005739">
    <property type="term" value="C:mitochondrion"/>
    <property type="evidence" value="ECO:0006056"/>
    <property type="project" value="FlyBase"/>
</dbReference>
<dbReference type="GO" id="GO:0045271">
    <property type="term" value="C:respiratory chain complex I"/>
    <property type="evidence" value="ECO:0000318"/>
    <property type="project" value="GO_Central"/>
</dbReference>
<dbReference type="GO" id="GO:0006120">
    <property type="term" value="P:mitochondrial electron transport, NADH to ubiquinone"/>
    <property type="evidence" value="ECO:0007669"/>
    <property type="project" value="InterPro"/>
</dbReference>
<dbReference type="InterPro" id="IPR009423">
    <property type="entry name" value="NDUC2"/>
</dbReference>
<dbReference type="PANTHER" id="PTHR13099:SF0">
    <property type="entry name" value="NADH DEHYDROGENASE [UBIQUINONE] 1 SUBUNIT C2-RELATED"/>
    <property type="match status" value="1"/>
</dbReference>
<dbReference type="PANTHER" id="PTHR13099">
    <property type="entry name" value="NADH-UBIQUINONE OXIDOREDUCTASE SUBUNIT B14.5B"/>
    <property type="match status" value="1"/>
</dbReference>
<dbReference type="Pfam" id="PF06374">
    <property type="entry name" value="NDUF_C2"/>
    <property type="match status" value="1"/>
</dbReference>
<dbReference type="PIRSF" id="PIRSF017834">
    <property type="entry name" value="NADH-UbQ_OxRdtase_b14.5b"/>
    <property type="match status" value="1"/>
</dbReference>
<feature type="chain" id="PRO_0000422827" description="NADH dehydrogenase [ubiquinone] 1 subunit C2, isoform 2">
    <location>
        <begin position="1"/>
        <end position="114"/>
    </location>
</feature>
<feature type="transmembrane region" description="Helical" evidence="2">
    <location>
        <begin position="56"/>
        <end position="75"/>
    </location>
</feature>
<sequence length="114" mass="13408">MIARRNPEPLRFLPDEARSLPPPKLTDPRLLYIGFLGYCSGLIDNLIRRRPIATAGLHRQLLYITAFFFAGYYLVKREDYLYAVRDREMFGYMKLHPEDFPEEDVYCCGAERRG</sequence>
<gene>
    <name type="primary">NDUFC2-KCTD14</name>
</gene>
<keyword id="KW-0025">Alternative splicing</keyword>
<keyword id="KW-0249">Electron transport</keyword>
<keyword id="KW-0472">Membrane</keyword>
<keyword id="KW-0496">Mitochondrion</keyword>
<keyword id="KW-0999">Mitochondrion inner membrane</keyword>
<keyword id="KW-1185">Reference proteome</keyword>
<keyword id="KW-0679">Respiratory chain</keyword>
<keyword id="KW-0812">Transmembrane</keyword>
<keyword id="KW-1133">Transmembrane helix</keyword>
<keyword id="KW-0813">Transport</keyword>
<name>NDUCR_HUMAN</name>
<comment type="function">
    <text evidence="1">Accessory subunit of the mitochondrial membrane respiratory chain NADH dehydrogenase (Complex I), that is believed not to be involved in catalysis. Complex I functions in the transfer of electrons from NADH to the respiratory chain. The immediate electron acceptor for the enzyme is believed to be ubiquinone (By similarity).</text>
</comment>
<comment type="subunit">
    <text>Complex I is composed of 45 different subunits.</text>
</comment>
<comment type="subcellular location">
    <subcellularLocation>
        <location evidence="1">Mitochondrion inner membrane</location>
        <topology evidence="1">Single-pass membrane protein</topology>
        <orientation evidence="1">Matrix side</orientation>
    </subcellularLocation>
</comment>
<comment type="alternative products">
    <event type="alternative splicing"/>
    <isoform>
        <id>E9PQ53-1</id>
        <name>2</name>
        <name>NDUFC2-KCTD14</name>
        <sequence type="displayed"/>
    </isoform>
    <isoform>
        <id>Q9BQ13-1</id>
        <name>1</name>
        <sequence type="external"/>
    </isoform>
    <isoform>
        <id>O95298-1</id>
        <name>3</name>
        <sequence type="external"/>
    </isoform>
</comment>
<comment type="miscellaneous">
    <molecule>Isoform 2</molecule>
    <text>Based on a readthrough transcript which may produce a NDUFC2-KCTD14 fusion protein.</text>
</comment>
<comment type="similarity">
    <text evidence="3">Belongs to the complex I NDUFC2 subunit family.</text>
</comment>
<reference key="1">
    <citation type="journal article" date="2006" name="Nature">
        <title>Human chromosome 11 DNA sequence and analysis including novel gene identification.</title>
        <authorList>
            <person name="Taylor T.D."/>
            <person name="Noguchi H."/>
            <person name="Totoki Y."/>
            <person name="Toyoda A."/>
            <person name="Kuroki Y."/>
            <person name="Dewar K."/>
            <person name="Lloyd C."/>
            <person name="Itoh T."/>
            <person name="Takeda T."/>
            <person name="Kim D.-W."/>
            <person name="She X."/>
            <person name="Barlow K.F."/>
            <person name="Bloom T."/>
            <person name="Bruford E."/>
            <person name="Chang J.L."/>
            <person name="Cuomo C.A."/>
            <person name="Eichler E."/>
            <person name="FitzGerald M.G."/>
            <person name="Jaffe D.B."/>
            <person name="LaButti K."/>
            <person name="Nicol R."/>
            <person name="Park H.-S."/>
            <person name="Seaman C."/>
            <person name="Sougnez C."/>
            <person name="Yang X."/>
            <person name="Zimmer A.R."/>
            <person name="Zody M.C."/>
            <person name="Birren B.W."/>
            <person name="Nusbaum C."/>
            <person name="Fujiyama A."/>
            <person name="Hattori M."/>
            <person name="Rogers J."/>
            <person name="Lander E.S."/>
            <person name="Sakaki Y."/>
        </authorList>
    </citation>
    <scope>NUCLEOTIDE SEQUENCE [LARGE SCALE GENOMIC DNA]</scope>
</reference>
<reference key="2">
    <citation type="journal article" date="2011" name="BMC Syst. Biol.">
        <title>Initial characterization of the human central proteome.</title>
        <authorList>
            <person name="Burkard T.R."/>
            <person name="Planyavsky M."/>
            <person name="Kaupe I."/>
            <person name="Breitwieser F.P."/>
            <person name="Buerckstuemmer T."/>
            <person name="Bennett K.L."/>
            <person name="Superti-Furga G."/>
            <person name="Colinge J."/>
        </authorList>
    </citation>
    <scope>IDENTIFICATION BY MASS SPECTROMETRY [LARGE SCALE ANALYSIS]</scope>
</reference>
<reference key="3">
    <citation type="journal article" date="2015" name="Proteomics">
        <title>N-terminome analysis of the human mitochondrial proteome.</title>
        <authorList>
            <person name="Vaca Jacome A.S."/>
            <person name="Rabilloud T."/>
            <person name="Schaeffer-Reiss C."/>
            <person name="Rompais M."/>
            <person name="Ayoub D."/>
            <person name="Lane L."/>
            <person name="Bairoch A."/>
            <person name="Van Dorsselaer A."/>
            <person name="Carapito C."/>
        </authorList>
    </citation>
    <scope>IDENTIFICATION BY MASS SPECTROMETRY [LARGE SCALE ANALYSIS]</scope>
</reference>
<organism>
    <name type="scientific">Homo sapiens</name>
    <name type="common">Human</name>
    <dbReference type="NCBI Taxonomy" id="9606"/>
    <lineage>
        <taxon>Eukaryota</taxon>
        <taxon>Metazoa</taxon>
        <taxon>Chordata</taxon>
        <taxon>Craniata</taxon>
        <taxon>Vertebrata</taxon>
        <taxon>Euteleostomi</taxon>
        <taxon>Mammalia</taxon>
        <taxon>Eutheria</taxon>
        <taxon>Euarchontoglires</taxon>
        <taxon>Primates</taxon>
        <taxon>Haplorrhini</taxon>
        <taxon>Catarrhini</taxon>
        <taxon>Hominidae</taxon>
        <taxon>Homo</taxon>
    </lineage>
</organism>
<evidence type="ECO:0000250" key="1"/>
<evidence type="ECO:0000255" key="2"/>
<evidence type="ECO:0000305" key="3"/>
<protein>
    <recommendedName>
        <fullName>NADH dehydrogenase [ubiquinone] 1 subunit C2, isoform 2</fullName>
    </recommendedName>
    <alternativeName>
        <fullName>NDUFC2-KCTD14 readthrough transcript protein</fullName>
    </alternativeName>
</protein>
<accession>E9PQ53</accession>
<proteinExistence type="evidence at protein level"/>